<keyword id="KW-0963">Cytoplasm</keyword>
<keyword id="KW-0269">Exonuclease</keyword>
<keyword id="KW-0378">Hydrolase</keyword>
<keyword id="KW-0540">Nuclease</keyword>
<proteinExistence type="inferred from homology"/>
<comment type="function">
    <text evidence="1">Bidirectionally degrades single-stranded DNA into large acid-insoluble oligonucleotides, which are then degraded further into small acid-soluble oligonucleotides.</text>
</comment>
<comment type="catalytic activity">
    <reaction evidence="1">
        <text>Exonucleolytic cleavage in either 5'- to 3'- or 3'- to 5'-direction to yield nucleoside 5'-phosphates.</text>
        <dbReference type="EC" id="3.1.11.6"/>
    </reaction>
</comment>
<comment type="subunit">
    <text evidence="1">Heterooligomer composed of large and small subunits.</text>
</comment>
<comment type="subcellular location">
    <subcellularLocation>
        <location evidence="1">Cytoplasm</location>
    </subcellularLocation>
</comment>
<comment type="similarity">
    <text evidence="1">Belongs to the XseB family.</text>
</comment>
<protein>
    <recommendedName>
        <fullName evidence="1">Exodeoxyribonuclease 7 small subunit</fullName>
        <ecNumber evidence="1">3.1.11.6</ecNumber>
    </recommendedName>
    <alternativeName>
        <fullName evidence="1">Exodeoxyribonuclease VII small subunit</fullName>
        <shortName evidence="1">Exonuclease VII small subunit</shortName>
    </alternativeName>
</protein>
<reference key="1">
    <citation type="journal article" date="2009" name="J. Bacteriol.">
        <title>Role of conjugative elements in the evolution of the multidrug-resistant pandemic clone Streptococcus pneumoniae Spain23F ST81.</title>
        <authorList>
            <person name="Croucher N.J."/>
            <person name="Walker D."/>
            <person name="Romero P."/>
            <person name="Lennard N."/>
            <person name="Paterson G.K."/>
            <person name="Bason N.C."/>
            <person name="Mitchell A.M."/>
            <person name="Quail M.A."/>
            <person name="Andrew P.W."/>
            <person name="Parkhill J."/>
            <person name="Bentley S.D."/>
            <person name="Mitchell T.J."/>
        </authorList>
    </citation>
    <scope>NUCLEOTIDE SEQUENCE [LARGE SCALE GENOMIC DNA]</scope>
    <source>
        <strain>ATCC 700669 / Spain 23F-1</strain>
    </source>
</reference>
<organism>
    <name type="scientific">Streptococcus pneumoniae (strain ATCC 700669 / Spain 23F-1)</name>
    <dbReference type="NCBI Taxonomy" id="561276"/>
    <lineage>
        <taxon>Bacteria</taxon>
        <taxon>Bacillati</taxon>
        <taxon>Bacillota</taxon>
        <taxon>Bacilli</taxon>
        <taxon>Lactobacillales</taxon>
        <taxon>Streptococcaceae</taxon>
        <taxon>Streptococcus</taxon>
    </lineage>
</organism>
<feature type="chain" id="PRO_1000200262" description="Exodeoxyribonuclease 7 small subunit">
    <location>
        <begin position="1"/>
        <end position="70"/>
    </location>
</feature>
<sequence>MSKQKKFEENLAELETIVQSLENGEIALEDAITAFQKGMVLSKELQATLDKAEKTLVKVMQEDGTESDFE</sequence>
<accession>B8ZQ75</accession>
<dbReference type="EC" id="3.1.11.6" evidence="1"/>
<dbReference type="EMBL" id="FM211187">
    <property type="protein sequence ID" value="CAR68916.1"/>
    <property type="molecule type" value="Genomic_DNA"/>
</dbReference>
<dbReference type="RefSeq" id="WP_000043230.1">
    <property type="nucleotide sequence ID" value="NC_011900.1"/>
</dbReference>
<dbReference type="SMR" id="B8ZQ75"/>
<dbReference type="KEGG" id="sne:SPN23F11060"/>
<dbReference type="HOGENOM" id="CLU_145918_3_2_9"/>
<dbReference type="GO" id="GO:0005829">
    <property type="term" value="C:cytosol"/>
    <property type="evidence" value="ECO:0007669"/>
    <property type="project" value="TreeGrafter"/>
</dbReference>
<dbReference type="GO" id="GO:0009318">
    <property type="term" value="C:exodeoxyribonuclease VII complex"/>
    <property type="evidence" value="ECO:0007669"/>
    <property type="project" value="InterPro"/>
</dbReference>
<dbReference type="GO" id="GO:0008855">
    <property type="term" value="F:exodeoxyribonuclease VII activity"/>
    <property type="evidence" value="ECO:0007669"/>
    <property type="project" value="UniProtKB-UniRule"/>
</dbReference>
<dbReference type="GO" id="GO:0006308">
    <property type="term" value="P:DNA catabolic process"/>
    <property type="evidence" value="ECO:0007669"/>
    <property type="project" value="UniProtKB-UniRule"/>
</dbReference>
<dbReference type="FunFam" id="1.10.287.1040:FF:000003">
    <property type="entry name" value="Exodeoxyribonuclease 7 small subunit"/>
    <property type="match status" value="1"/>
</dbReference>
<dbReference type="Gene3D" id="1.10.287.1040">
    <property type="entry name" value="Exonuclease VII, small subunit"/>
    <property type="match status" value="1"/>
</dbReference>
<dbReference type="HAMAP" id="MF_00337">
    <property type="entry name" value="Exonuc_7_S"/>
    <property type="match status" value="1"/>
</dbReference>
<dbReference type="InterPro" id="IPR003761">
    <property type="entry name" value="Exonuc_VII_S"/>
</dbReference>
<dbReference type="InterPro" id="IPR037004">
    <property type="entry name" value="Exonuc_VII_ssu_sf"/>
</dbReference>
<dbReference type="NCBIfam" id="NF002138">
    <property type="entry name" value="PRK00977.1-2"/>
    <property type="match status" value="1"/>
</dbReference>
<dbReference type="NCBIfam" id="TIGR01280">
    <property type="entry name" value="xseB"/>
    <property type="match status" value="1"/>
</dbReference>
<dbReference type="PANTHER" id="PTHR34137">
    <property type="entry name" value="EXODEOXYRIBONUCLEASE 7 SMALL SUBUNIT"/>
    <property type="match status" value="1"/>
</dbReference>
<dbReference type="PANTHER" id="PTHR34137:SF1">
    <property type="entry name" value="EXODEOXYRIBONUCLEASE 7 SMALL SUBUNIT"/>
    <property type="match status" value="1"/>
</dbReference>
<dbReference type="Pfam" id="PF02609">
    <property type="entry name" value="Exonuc_VII_S"/>
    <property type="match status" value="1"/>
</dbReference>
<dbReference type="PIRSF" id="PIRSF006488">
    <property type="entry name" value="Exonuc_VII_S"/>
    <property type="match status" value="1"/>
</dbReference>
<dbReference type="SUPFAM" id="SSF116842">
    <property type="entry name" value="XseB-like"/>
    <property type="match status" value="1"/>
</dbReference>
<gene>
    <name evidence="1" type="primary">xseB</name>
    <name type="ordered locus">SPN23F11060</name>
</gene>
<evidence type="ECO:0000255" key="1">
    <source>
        <dbReference type="HAMAP-Rule" id="MF_00337"/>
    </source>
</evidence>
<name>EX7S_STRPJ</name>